<proteinExistence type="evidence at protein level"/>
<organism evidence="4">
    <name type="scientific">Delftia acidovorans</name>
    <name type="common">Pseudomonas acidovorans</name>
    <name type="synonym">Comamonas acidovorans</name>
    <dbReference type="NCBI Taxonomy" id="80866"/>
    <lineage>
        <taxon>Bacteria</taxon>
        <taxon>Pseudomonadati</taxon>
        <taxon>Pseudomonadota</taxon>
        <taxon>Betaproteobacteria</taxon>
        <taxon>Burkholderiales</taxon>
        <taxon>Comamonadaceae</taxon>
        <taxon>Delftia</taxon>
    </lineage>
</organism>
<comment type="catalytic activity">
    <reaction>
        <text>3,5-dichlorocatechol + O2 = (2E,4E)-2,4-dichloromuconate + 2 H(+)</text>
        <dbReference type="Rhea" id="RHEA:48572"/>
        <dbReference type="ChEBI" id="CHEBI:11438"/>
        <dbReference type="ChEBI" id="CHEBI:15378"/>
        <dbReference type="ChEBI" id="CHEBI:15379"/>
        <dbReference type="ChEBI" id="CHEBI:15788"/>
    </reaction>
</comment>
<comment type="cofactor">
    <cofactor evidence="1">
        <name>Fe(3+)</name>
        <dbReference type="ChEBI" id="CHEBI:29034"/>
    </cofactor>
    <text evidence="1">Binds 1 Fe(3+) ion per subunit.</text>
</comment>
<comment type="pathway">
    <text>Xenobiotic degradation; 2-(2,4-dichlorophenoxy)propanoate degradation.</text>
</comment>
<comment type="induction">
    <text evidence="2">By chemostress caused by the herbicide 2,4-dichlorophenoxypropionic acid and its metabolites.</text>
</comment>
<comment type="similarity">
    <text evidence="4">Belongs to the intradiol ring-cleavage dioxygenase family.</text>
</comment>
<feature type="chain" id="PRO_0000085092" description="Chlorocatechol 1,2-dioxygenase 1">
    <location>
        <begin position="1"/>
        <end position="25" status="greater than"/>
    </location>
</feature>
<feature type="non-terminal residue" evidence="3">
    <location>
        <position position="25"/>
    </location>
</feature>
<accession>P83115</accession>
<keyword id="KW-0058">Aromatic hydrocarbons catabolism</keyword>
<keyword id="KW-0223">Dioxygenase</keyword>
<keyword id="KW-0903">Direct protein sequencing</keyword>
<keyword id="KW-0408">Iron</keyword>
<keyword id="KW-0479">Metal-binding</keyword>
<keyword id="KW-0560">Oxidoreductase</keyword>
<protein>
    <recommendedName>
        <fullName>Chlorocatechol 1,2-dioxygenase 1</fullName>
        <ecNumber>1.13.11.-</ecNumber>
    </recommendedName>
    <alternativeName>
        <fullName>TfdCI</fullName>
    </alternativeName>
</protein>
<sequence length="25" mass="2828">MNERVKQVASALVDAIQKTLTEQRV</sequence>
<evidence type="ECO:0000250" key="1"/>
<evidence type="ECO:0000269" key="2">
    <source>
    </source>
</evidence>
<evidence type="ECO:0000303" key="3">
    <source>
    </source>
</evidence>
<evidence type="ECO:0000305" key="4"/>
<reference evidence="4" key="1">
    <citation type="journal article" date="2002" name="Microbiology">
        <title>Assimilatory detoxification of herbicides by Delftia acidovorans MC1: induction of two chlorocatechol 1,2-dioxygenases as a response to chemostress.</title>
        <authorList>
            <person name="Benndorf D."/>
            <person name="Babel W."/>
        </authorList>
    </citation>
    <scope>PROTEIN SEQUENCE</scope>
    <scope>INDUCTION</scope>
    <source>
        <strain evidence="2">MC1</strain>
    </source>
</reference>
<name>TFDC1_DELAC</name>
<dbReference type="EC" id="1.13.11.-"/>
<dbReference type="SMR" id="P83115"/>
<dbReference type="UniPathway" id="UPA00348"/>
<dbReference type="GO" id="GO:0051213">
    <property type="term" value="F:dioxygenase activity"/>
    <property type="evidence" value="ECO:0007669"/>
    <property type="project" value="UniProtKB-KW"/>
</dbReference>
<dbReference type="GO" id="GO:0046872">
    <property type="term" value="F:metal ion binding"/>
    <property type="evidence" value="ECO:0007669"/>
    <property type="project" value="UniProtKB-KW"/>
</dbReference>
<dbReference type="GO" id="GO:0009056">
    <property type="term" value="P:catabolic process"/>
    <property type="evidence" value="ECO:0007669"/>
    <property type="project" value="UniProtKB-KW"/>
</dbReference>
<gene>
    <name type="primary">tfdC</name>
</gene>